<name>KEI1_YEAST</name>
<reference key="1">
    <citation type="journal article" date="1997" name="Nature">
        <title>The nucleotide sequence of Saccharomyces cerevisiae chromosome IV.</title>
        <authorList>
            <person name="Jacq C."/>
            <person name="Alt-Moerbe J."/>
            <person name="Andre B."/>
            <person name="Arnold W."/>
            <person name="Bahr A."/>
            <person name="Ballesta J.P.G."/>
            <person name="Bargues M."/>
            <person name="Baron L."/>
            <person name="Becker A."/>
            <person name="Biteau N."/>
            <person name="Bloecker H."/>
            <person name="Blugeon C."/>
            <person name="Boskovic J."/>
            <person name="Brandt P."/>
            <person name="Brueckner M."/>
            <person name="Buitrago M.J."/>
            <person name="Coster F."/>
            <person name="Delaveau T."/>
            <person name="del Rey F."/>
            <person name="Dujon B."/>
            <person name="Eide L.G."/>
            <person name="Garcia-Cantalejo J.M."/>
            <person name="Goffeau A."/>
            <person name="Gomez-Peris A."/>
            <person name="Granotier C."/>
            <person name="Hanemann V."/>
            <person name="Hankeln T."/>
            <person name="Hoheisel J.D."/>
            <person name="Jaeger W."/>
            <person name="Jimenez A."/>
            <person name="Jonniaux J.-L."/>
            <person name="Kraemer C."/>
            <person name="Kuester H."/>
            <person name="Laamanen P."/>
            <person name="Legros Y."/>
            <person name="Louis E.J."/>
            <person name="Moeller-Rieker S."/>
            <person name="Monnet A."/>
            <person name="Moro M."/>
            <person name="Mueller-Auer S."/>
            <person name="Nussbaumer B."/>
            <person name="Paricio N."/>
            <person name="Paulin L."/>
            <person name="Perea J."/>
            <person name="Perez-Alonso M."/>
            <person name="Perez-Ortin J.E."/>
            <person name="Pohl T.M."/>
            <person name="Prydz H."/>
            <person name="Purnelle B."/>
            <person name="Rasmussen S.W."/>
            <person name="Remacha M.A."/>
            <person name="Revuelta J.L."/>
            <person name="Rieger M."/>
            <person name="Salom D."/>
            <person name="Saluz H.P."/>
            <person name="Saiz J.E."/>
            <person name="Saren A.-M."/>
            <person name="Schaefer M."/>
            <person name="Scharfe M."/>
            <person name="Schmidt E.R."/>
            <person name="Schneider C."/>
            <person name="Scholler P."/>
            <person name="Schwarz S."/>
            <person name="Soler-Mira A."/>
            <person name="Urrestarazu L.A."/>
            <person name="Verhasselt P."/>
            <person name="Vissers S."/>
            <person name="Voet M."/>
            <person name="Volckaert G."/>
            <person name="Wagner G."/>
            <person name="Wambutt R."/>
            <person name="Wedler E."/>
            <person name="Wedler H."/>
            <person name="Woelfl S."/>
            <person name="Harris D.E."/>
            <person name="Bowman S."/>
            <person name="Brown D."/>
            <person name="Churcher C.M."/>
            <person name="Connor R."/>
            <person name="Dedman K."/>
            <person name="Gentles S."/>
            <person name="Hamlin N."/>
            <person name="Hunt S."/>
            <person name="Jones L."/>
            <person name="McDonald S."/>
            <person name="Murphy L.D."/>
            <person name="Niblett D."/>
            <person name="Odell C."/>
            <person name="Oliver K."/>
            <person name="Rajandream M.A."/>
            <person name="Richards C."/>
            <person name="Shore L."/>
            <person name="Walsh S.V."/>
            <person name="Barrell B.G."/>
            <person name="Dietrich F.S."/>
            <person name="Mulligan J.T."/>
            <person name="Allen E."/>
            <person name="Araujo R."/>
            <person name="Aviles E."/>
            <person name="Berno A."/>
            <person name="Carpenter J."/>
            <person name="Chen E."/>
            <person name="Cherry J.M."/>
            <person name="Chung E."/>
            <person name="Duncan M."/>
            <person name="Hunicke-Smith S."/>
            <person name="Hyman R.W."/>
            <person name="Komp C."/>
            <person name="Lashkari D."/>
            <person name="Lew H."/>
            <person name="Lin D."/>
            <person name="Mosedale D."/>
            <person name="Nakahara K."/>
            <person name="Namath A."/>
            <person name="Oefner P."/>
            <person name="Oh C."/>
            <person name="Petel F.X."/>
            <person name="Roberts D."/>
            <person name="Schramm S."/>
            <person name="Schroeder M."/>
            <person name="Shogren T."/>
            <person name="Shroff N."/>
            <person name="Winant A."/>
            <person name="Yelton M.A."/>
            <person name="Botstein D."/>
            <person name="Davis R.W."/>
            <person name="Johnston M."/>
            <person name="Andrews S."/>
            <person name="Brinkman R."/>
            <person name="Cooper J."/>
            <person name="Ding H."/>
            <person name="Du Z."/>
            <person name="Favello A."/>
            <person name="Fulton L."/>
            <person name="Gattung S."/>
            <person name="Greco T."/>
            <person name="Hallsworth K."/>
            <person name="Hawkins J."/>
            <person name="Hillier L.W."/>
            <person name="Jier M."/>
            <person name="Johnson D."/>
            <person name="Johnston L."/>
            <person name="Kirsten J."/>
            <person name="Kucaba T."/>
            <person name="Langston Y."/>
            <person name="Latreille P."/>
            <person name="Le T."/>
            <person name="Mardis E."/>
            <person name="Menezes S."/>
            <person name="Miller N."/>
            <person name="Nhan M."/>
            <person name="Pauley A."/>
            <person name="Peluso D."/>
            <person name="Rifkin L."/>
            <person name="Riles L."/>
            <person name="Taich A."/>
            <person name="Trevaskis E."/>
            <person name="Vignati D."/>
            <person name="Wilcox L."/>
            <person name="Wohldman P."/>
            <person name="Vaudin M."/>
            <person name="Wilson R."/>
            <person name="Waterston R."/>
            <person name="Albermann K."/>
            <person name="Hani J."/>
            <person name="Heumann K."/>
            <person name="Kleine K."/>
            <person name="Mewes H.-W."/>
            <person name="Zollner A."/>
            <person name="Zaccaria P."/>
        </authorList>
    </citation>
    <scope>NUCLEOTIDE SEQUENCE [LARGE SCALE GENOMIC DNA]</scope>
    <source>
        <strain>ATCC 204508 / S288c</strain>
    </source>
</reference>
<reference key="2">
    <citation type="journal article" date="2014" name="G3 (Bethesda)">
        <title>The reference genome sequence of Saccharomyces cerevisiae: Then and now.</title>
        <authorList>
            <person name="Engel S.R."/>
            <person name="Dietrich F.S."/>
            <person name="Fisk D.G."/>
            <person name="Binkley G."/>
            <person name="Balakrishnan R."/>
            <person name="Costanzo M.C."/>
            <person name="Dwight S.S."/>
            <person name="Hitz B.C."/>
            <person name="Karra K."/>
            <person name="Nash R.S."/>
            <person name="Weng S."/>
            <person name="Wong E.D."/>
            <person name="Lloyd P."/>
            <person name="Skrzypek M.S."/>
            <person name="Miyasato S.R."/>
            <person name="Simison M."/>
            <person name="Cherry J.M."/>
        </authorList>
    </citation>
    <scope>GENOME REANNOTATION</scope>
    <source>
        <strain>ATCC 204508 / S288c</strain>
    </source>
</reference>
<reference key="3">
    <citation type="submission" date="1994-07" db="EMBL/GenBank/DDBJ databases">
        <title>A new yeast gene with homology to the aldo-keto reductase protein family.</title>
        <authorList>
            <person name="Miosga T."/>
            <person name="Juhnke H."/>
            <person name="Sterkel C."/>
            <person name="Zimmermann F.K."/>
        </authorList>
    </citation>
    <scope>NUCLEOTIDE SEQUENCE [GENOMIC DNA] OF 11-221</scope>
    <source>
        <strain>M5</strain>
    </source>
</reference>
<reference key="4">
    <citation type="journal article" date="2000" name="Nucleic Acids Res.">
        <title>Test of intron predictions reveals novel splice sites, alternatively spliced mRNAs and new introns in meiotically regulated genes of yeast.</title>
        <authorList>
            <person name="Davis C.A."/>
            <person name="Grate L."/>
            <person name="Spingola M."/>
            <person name="Ares M. Jr."/>
        </authorList>
    </citation>
    <scope>IDENTIFICATION OF INTRON</scope>
</reference>
<reference key="5">
    <citation type="journal article" date="2003" name="Nature">
        <title>Global analysis of protein localization in budding yeast.</title>
        <authorList>
            <person name="Huh W.-K."/>
            <person name="Falvo J.V."/>
            <person name="Gerke L.C."/>
            <person name="Carroll A.S."/>
            <person name="Howson R.W."/>
            <person name="Weissman J.S."/>
            <person name="O'Shea E.K."/>
        </authorList>
    </citation>
    <scope>SUBCELLULAR LOCATION [LARGE SCALE ANALYSIS]</scope>
</reference>
<reference key="6">
    <citation type="journal article" date="2003" name="Nature">
        <title>Global analysis of protein expression in yeast.</title>
        <authorList>
            <person name="Ghaemmaghami S."/>
            <person name="Huh W.-K."/>
            <person name="Bower K."/>
            <person name="Howson R.W."/>
            <person name="Belle A."/>
            <person name="Dephoure N."/>
            <person name="O'Shea E.K."/>
            <person name="Weissman J.S."/>
        </authorList>
    </citation>
    <scope>LEVEL OF PROTEIN EXPRESSION [LARGE SCALE ANALYSIS]</scope>
</reference>
<reference key="7">
    <citation type="journal article" date="2009" name="Mol. Biol. Cell">
        <title>Kei1: a novel subunit of inositolphosphorylceramide synthase, essential for its enzyme activity and Golgi localization.</title>
        <authorList>
            <person name="Sato K."/>
            <person name="Noda Y."/>
            <person name="Yoda K."/>
        </authorList>
    </citation>
    <scope>FUNCTION</scope>
    <scope>SUBCELLULAR LOCATION</scope>
    <scope>INTERACTION WITH AUR1; COP1 AND SEC21</scope>
    <scope>MUTAGENESIS OF PHE-103 AND ARG-135</scope>
</reference>
<organism>
    <name type="scientific">Saccharomyces cerevisiae (strain ATCC 204508 / S288c)</name>
    <name type="common">Baker's yeast</name>
    <dbReference type="NCBI Taxonomy" id="559292"/>
    <lineage>
        <taxon>Eukaryota</taxon>
        <taxon>Fungi</taxon>
        <taxon>Dikarya</taxon>
        <taxon>Ascomycota</taxon>
        <taxon>Saccharomycotina</taxon>
        <taxon>Saccharomycetes</taxon>
        <taxon>Saccharomycetales</taxon>
        <taxon>Saccharomycetaceae</taxon>
        <taxon>Saccharomyces</taxon>
    </lineage>
</organism>
<accession>Q06346</accession>
<accession>D6VSZ8</accession>
<accession>Q06999</accession>
<gene>
    <name type="primary">KEI1</name>
    <name type="ordered locus">YDR367W</name>
</gene>
<feature type="chain" id="PRO_0000253846" description="Inositol phosphorylceramide synthase regulatory subunit KEI1">
    <location>
        <begin position="1"/>
        <end position="221"/>
    </location>
</feature>
<feature type="chain" id="PRO_0000409445" description="KEI1N">
    <location>
        <begin position="1"/>
        <end position="135"/>
    </location>
</feature>
<feature type="chain" id="PRO_0000409446" description="KEI1C">
    <location>
        <begin position="136"/>
        <end position="221"/>
    </location>
</feature>
<feature type="transmembrane region" description="Helical" evidence="1">
    <location>
        <begin position="11"/>
        <end position="31"/>
    </location>
</feature>
<feature type="transmembrane region" description="Helical" evidence="1">
    <location>
        <begin position="54"/>
        <end position="74"/>
    </location>
</feature>
<feature type="transmembrane region" description="Helical" evidence="1">
    <location>
        <begin position="79"/>
        <end position="99"/>
    </location>
</feature>
<feature type="transmembrane region" description="Helical" evidence="1">
    <location>
        <begin position="154"/>
        <end position="174"/>
    </location>
</feature>
<feature type="region of interest" description="COPI vesicle-binding">
    <location>
        <begin position="176"/>
        <end position="221"/>
    </location>
</feature>
<feature type="mutagenesis site" description="Decreases ICP synthase activity." evidence="4">
    <original>F</original>
    <variation>I</variation>
    <location>
        <position position="103"/>
    </location>
</feature>
<feature type="mutagenesis site" description="Impairs cleavage by KEX2." evidence="4">
    <original>R</original>
    <variation>S</variation>
    <location>
        <position position="135"/>
    </location>
</feature>
<keyword id="KW-0333">Golgi apparatus</keyword>
<keyword id="KW-0443">Lipid metabolism</keyword>
<keyword id="KW-0472">Membrane</keyword>
<keyword id="KW-1185">Reference proteome</keyword>
<keyword id="KW-0746">Sphingolipid metabolism</keyword>
<keyword id="KW-0812">Transmembrane</keyword>
<keyword id="KW-1133">Transmembrane helix</keyword>
<dbReference type="EMBL" id="U28373">
    <property type="protein sequence ID" value="AAB64803.1"/>
    <property type="status" value="ALT_SEQ"/>
    <property type="molecule type" value="Genomic_DNA"/>
</dbReference>
<dbReference type="EMBL" id="X80642">
    <property type="protein sequence ID" value="CAA56685.1"/>
    <property type="status" value="ALT_FRAME"/>
    <property type="molecule type" value="Genomic_DNA"/>
</dbReference>
<dbReference type="EMBL" id="BK006938">
    <property type="protein sequence ID" value="DAA12208.1"/>
    <property type="molecule type" value="Genomic_DNA"/>
</dbReference>
<dbReference type="PIR" id="S70234">
    <property type="entry name" value="S70234"/>
</dbReference>
<dbReference type="RefSeq" id="NP_010655.1">
    <property type="nucleotide sequence ID" value="NM_001180675.1"/>
</dbReference>
<dbReference type="SMR" id="Q06346"/>
<dbReference type="BioGRID" id="32426">
    <property type="interactions" value="22"/>
</dbReference>
<dbReference type="ComplexPortal" id="CPX-2894">
    <property type="entry name" value="Inositol phosphorylceramide synthase complex"/>
</dbReference>
<dbReference type="DIP" id="DIP-8823N"/>
<dbReference type="FunCoup" id="Q06346">
    <property type="interactions" value="27"/>
</dbReference>
<dbReference type="IntAct" id="Q06346">
    <property type="interactions" value="9"/>
</dbReference>
<dbReference type="STRING" id="4932.YDR367W"/>
<dbReference type="PaxDb" id="4932-YDR367W"/>
<dbReference type="PeptideAtlas" id="Q06346"/>
<dbReference type="EnsemblFungi" id="YDR367W_mRNA">
    <property type="protein sequence ID" value="YDR367W"/>
    <property type="gene ID" value="YDR367W"/>
</dbReference>
<dbReference type="GeneID" id="851973"/>
<dbReference type="KEGG" id="sce:YDR367W"/>
<dbReference type="AGR" id="SGD:S000002775"/>
<dbReference type="SGD" id="S000002775">
    <property type="gene designation" value="KEI1"/>
</dbReference>
<dbReference type="VEuPathDB" id="FungiDB:YDR367W"/>
<dbReference type="eggNOG" id="ENOG502QT2Z">
    <property type="taxonomic scope" value="Eukaryota"/>
</dbReference>
<dbReference type="HOGENOM" id="CLU_103819_1_0_1"/>
<dbReference type="InParanoid" id="Q06346"/>
<dbReference type="OMA" id="DQPVGFN"/>
<dbReference type="OrthoDB" id="3338076at2759"/>
<dbReference type="BioCyc" id="MetaCyc:G3O-29917-MONOMER"/>
<dbReference type="BioCyc" id="YEAST:G3O-29917-MONOMER"/>
<dbReference type="BRENDA" id="2.7.1.227">
    <property type="organism ID" value="984"/>
</dbReference>
<dbReference type="BioGRID-ORCS" id="851973">
    <property type="hits" value="0 hits in 10 CRISPR screens"/>
</dbReference>
<dbReference type="PRO" id="PR:Q06346"/>
<dbReference type="Proteomes" id="UP000002311">
    <property type="component" value="Chromosome IV"/>
</dbReference>
<dbReference type="RNAct" id="Q06346">
    <property type="molecule type" value="protein"/>
</dbReference>
<dbReference type="GO" id="GO:0005737">
    <property type="term" value="C:cytoplasm"/>
    <property type="evidence" value="ECO:0007005"/>
    <property type="project" value="SGD"/>
</dbReference>
<dbReference type="GO" id="GO:0005794">
    <property type="term" value="C:Golgi apparatus"/>
    <property type="evidence" value="ECO:0007005"/>
    <property type="project" value="SGD"/>
</dbReference>
<dbReference type="GO" id="GO:0000139">
    <property type="term" value="C:Golgi membrane"/>
    <property type="evidence" value="ECO:0000314"/>
    <property type="project" value="SGD"/>
</dbReference>
<dbReference type="GO" id="GO:0070916">
    <property type="term" value="C:inositol phosphoceramide synthase complex"/>
    <property type="evidence" value="ECO:0000353"/>
    <property type="project" value="ComplexPortal"/>
</dbReference>
<dbReference type="GO" id="GO:0070917">
    <property type="term" value="F:inositol phosphoceramide synthase regulator activity"/>
    <property type="evidence" value="ECO:0000315"/>
    <property type="project" value="SGD"/>
</dbReference>
<dbReference type="GO" id="GO:0006673">
    <property type="term" value="P:inositol phosphoceramide metabolic process"/>
    <property type="evidence" value="ECO:0000314"/>
    <property type="project" value="ComplexPortal"/>
</dbReference>
<dbReference type="GO" id="GO:0030148">
    <property type="term" value="P:sphingolipid biosynthetic process"/>
    <property type="evidence" value="ECO:0000353"/>
    <property type="project" value="ComplexPortal"/>
</dbReference>
<dbReference type="InterPro" id="IPR013862">
    <property type="entry name" value="Kei1"/>
</dbReference>
<dbReference type="PANTHER" id="PTHR28077">
    <property type="entry name" value="INOSITOL PHOSPHORYLCERAMIDE SYNTHASE REGULATORY SUBUNIT KEI1"/>
    <property type="match status" value="1"/>
</dbReference>
<dbReference type="PANTHER" id="PTHR28077:SF1">
    <property type="entry name" value="INOSITOL PHOSPHORYLCERAMIDE SYNTHASE REGULATORY SUBUNIT KEI1"/>
    <property type="match status" value="1"/>
</dbReference>
<dbReference type="Pfam" id="PF08552">
    <property type="entry name" value="Kei1"/>
    <property type="match status" value="1"/>
</dbReference>
<protein>
    <recommendedName>
        <fullName>Inositol phosphorylceramide synthase regulatory subunit KEI1</fullName>
        <shortName>ICP synthase regulatory subunit KEI1</shortName>
    </recommendedName>
    <alternativeName>
        <fullName>KEX2-cleavable protein essential for inositol phosphorylceramide synthesis</fullName>
    </alternativeName>
    <component>
        <recommendedName>
            <fullName>KEI1N</fullName>
        </recommendedName>
    </component>
    <component>
        <recommendedName>
            <fullName>KEI1C</fullName>
        </recommendedName>
    </component>
</protein>
<sequence>MRSSLLTLPKSFLGFMPLYLAVEIVLGISILNKCSGAYGILALFTGHPLDFMQWIAYLWSVFTLIVFSQGLYLIHKPNLLVFSQICVLYTIDTISTCFFTLWFTTQWFTLEDTANIDGNNALQSNPISTGKLTERGIDISKQSATESYEYTMTILITLVSLIFRFYFNFILASFVQELLHHPKYLVDRDDVEQNLKNKPIWKRLWAKSQKGCYKLCKNLLE</sequence>
<comment type="function">
    <text evidence="4">Regulatory component of the inositol phosphorylceramide (ICP) synthase which catalyzes the addition of a phosphorylinositol group onto ceramide to form inositol phosphorylceramide, an essential step in sphingolipid biosynthesis. Helps the medial Golgi localization of IPC synthase in a COPI vesicle-dependent manner.</text>
</comment>
<comment type="subunit">
    <text evidence="4">Component of the inositol phosphorylceramide synthase complex composed of at least AUR1 and KEI1. Interacts (via C-terminal region) with COP1 and SEC21. Note=The interaction with AUR1 seems to occur with the full-length protein before cleavage by KEX2 since both full-length and short chains of KEI1 interact with AUR1.</text>
</comment>
<comment type="interaction">
    <interactant intactId="EBI-38431">
        <id>Q06346</id>
    </interactant>
    <interactant intactId="EBI-2046036">
        <id>P36107</id>
        <label>AUR1</label>
    </interactant>
    <organismsDiffer>false</organismsDiffer>
    <experiments>3</experiments>
</comment>
<comment type="subcellular location">
    <subcellularLocation>
        <location evidence="2 4">Golgi apparatus membrane</location>
        <topology evidence="2 4">Multi-pass membrane protein</topology>
    </subcellularLocation>
</comment>
<comment type="PTM">
    <text>The precursor protein is cleaved into two polypeptide chains, KEI1N and KEI1C. The cleavage is performed in the Golgi apparatus by the KEX2 protease which recognizes residue Arg-135. Generation of KEX2 cleavage site may have been an accidental event in evolution without specific advantages or disadvantages in IPC synthesis.</text>
</comment>
<comment type="miscellaneous">
    <text evidence="3">Present with 3420 molecules/cell in log phase SD medium.</text>
</comment>
<comment type="similarity">
    <text evidence="5">Belongs to the KEI1 family.</text>
</comment>
<comment type="sequence caution" evidence="5">
    <conflict type="erroneous gene model prediction">
        <sequence resource="EMBL-CDS" id="AAB64803"/>
    </conflict>
</comment>
<comment type="sequence caution" evidence="5">
    <conflict type="frameshift">
        <sequence resource="EMBL-CDS" id="CAA56685"/>
    </conflict>
</comment>
<proteinExistence type="evidence at protein level"/>
<evidence type="ECO:0000255" key="1"/>
<evidence type="ECO:0000269" key="2">
    <source>
    </source>
</evidence>
<evidence type="ECO:0000269" key="3">
    <source>
    </source>
</evidence>
<evidence type="ECO:0000269" key="4">
    <source>
    </source>
</evidence>
<evidence type="ECO:0000305" key="5"/>